<name>DCD_CHLAB</name>
<sequence>MSIKEDKWIRKMALAHGMIEPFADGQVNLNPETGEKLISYGLSSYGYDLRLSREFKVFTNVYNSLVDPKRFTEDTFISITDDVCIIPPNSFALAHSVEYFRIPRNVLTMCIGKSTYARCGLIVNVTPFEPEWEGYVTIEISNTTPLPAKIYANEGIAQVLFFEADEICEVSYAERKGKYQKQQGITVPFV</sequence>
<accession>Q5L687</accession>
<dbReference type="EC" id="3.5.4.13" evidence="1"/>
<dbReference type="EMBL" id="CR848038">
    <property type="protein sequence ID" value="CAH63844.1"/>
    <property type="molecule type" value="Genomic_DNA"/>
</dbReference>
<dbReference type="RefSeq" id="WP_011097035.1">
    <property type="nucleotide sequence ID" value="NC_004552.2"/>
</dbReference>
<dbReference type="SMR" id="Q5L687"/>
<dbReference type="GeneID" id="93024953"/>
<dbReference type="KEGG" id="cab:CAB391"/>
<dbReference type="eggNOG" id="COG0717">
    <property type="taxonomic scope" value="Bacteria"/>
</dbReference>
<dbReference type="HOGENOM" id="CLU_087476_4_0_0"/>
<dbReference type="OrthoDB" id="9780202at2"/>
<dbReference type="UniPathway" id="UPA00610">
    <property type="reaction ID" value="UER00665"/>
</dbReference>
<dbReference type="Proteomes" id="UP000001012">
    <property type="component" value="Chromosome"/>
</dbReference>
<dbReference type="GO" id="GO:0008829">
    <property type="term" value="F:dCTP deaminase activity"/>
    <property type="evidence" value="ECO:0007669"/>
    <property type="project" value="UniProtKB-UniRule"/>
</dbReference>
<dbReference type="GO" id="GO:0000166">
    <property type="term" value="F:nucleotide binding"/>
    <property type="evidence" value="ECO:0007669"/>
    <property type="project" value="UniProtKB-KW"/>
</dbReference>
<dbReference type="GO" id="GO:0006226">
    <property type="term" value="P:dUMP biosynthetic process"/>
    <property type="evidence" value="ECO:0007669"/>
    <property type="project" value="UniProtKB-UniPathway"/>
</dbReference>
<dbReference type="GO" id="GO:0006229">
    <property type="term" value="P:dUTP biosynthetic process"/>
    <property type="evidence" value="ECO:0007669"/>
    <property type="project" value="UniProtKB-UniRule"/>
</dbReference>
<dbReference type="GO" id="GO:0015949">
    <property type="term" value="P:nucleobase-containing small molecule interconversion"/>
    <property type="evidence" value="ECO:0007669"/>
    <property type="project" value="TreeGrafter"/>
</dbReference>
<dbReference type="CDD" id="cd07557">
    <property type="entry name" value="trimeric_dUTPase"/>
    <property type="match status" value="1"/>
</dbReference>
<dbReference type="FunFam" id="2.70.40.10:FF:000001">
    <property type="entry name" value="dCTP deaminase"/>
    <property type="match status" value="1"/>
</dbReference>
<dbReference type="Gene3D" id="2.70.40.10">
    <property type="match status" value="1"/>
</dbReference>
<dbReference type="HAMAP" id="MF_00146">
    <property type="entry name" value="dCTP_deaminase"/>
    <property type="match status" value="1"/>
</dbReference>
<dbReference type="InterPro" id="IPR011962">
    <property type="entry name" value="dCTP_deaminase"/>
</dbReference>
<dbReference type="InterPro" id="IPR036157">
    <property type="entry name" value="dUTPase-like_sf"/>
</dbReference>
<dbReference type="InterPro" id="IPR033704">
    <property type="entry name" value="dUTPase_trimeric"/>
</dbReference>
<dbReference type="NCBIfam" id="TIGR02274">
    <property type="entry name" value="dCTP_deam"/>
    <property type="match status" value="1"/>
</dbReference>
<dbReference type="PANTHER" id="PTHR42680">
    <property type="entry name" value="DCTP DEAMINASE"/>
    <property type="match status" value="1"/>
</dbReference>
<dbReference type="PANTHER" id="PTHR42680:SF3">
    <property type="entry name" value="DCTP DEAMINASE"/>
    <property type="match status" value="1"/>
</dbReference>
<dbReference type="Pfam" id="PF22769">
    <property type="entry name" value="DCD"/>
    <property type="match status" value="1"/>
</dbReference>
<dbReference type="SUPFAM" id="SSF51283">
    <property type="entry name" value="dUTPase-like"/>
    <property type="match status" value="1"/>
</dbReference>
<comment type="function">
    <text evidence="1">Catalyzes the deamination of dCTP to dUTP.</text>
</comment>
<comment type="catalytic activity">
    <reaction evidence="1">
        <text>dCTP + H2O + H(+) = dUTP + NH4(+)</text>
        <dbReference type="Rhea" id="RHEA:22680"/>
        <dbReference type="ChEBI" id="CHEBI:15377"/>
        <dbReference type="ChEBI" id="CHEBI:15378"/>
        <dbReference type="ChEBI" id="CHEBI:28938"/>
        <dbReference type="ChEBI" id="CHEBI:61481"/>
        <dbReference type="ChEBI" id="CHEBI:61555"/>
        <dbReference type="EC" id="3.5.4.13"/>
    </reaction>
</comment>
<comment type="pathway">
    <text evidence="1">Pyrimidine metabolism; dUMP biosynthesis; dUMP from dCTP (dUTP route): step 1/2.</text>
</comment>
<comment type="subunit">
    <text evidence="1">Homotrimer.</text>
</comment>
<comment type="similarity">
    <text evidence="1">Belongs to the dCTP deaminase family.</text>
</comment>
<protein>
    <recommendedName>
        <fullName evidence="1">dCTP deaminase</fullName>
        <ecNumber evidence="1">3.5.4.13</ecNumber>
    </recommendedName>
    <alternativeName>
        <fullName evidence="1">Deoxycytidine triphosphate deaminase</fullName>
    </alternativeName>
</protein>
<organism>
    <name type="scientific">Chlamydia abortus (strain DSM 27085 / S26/3)</name>
    <name type="common">Chlamydophila abortus</name>
    <dbReference type="NCBI Taxonomy" id="218497"/>
    <lineage>
        <taxon>Bacteria</taxon>
        <taxon>Pseudomonadati</taxon>
        <taxon>Chlamydiota</taxon>
        <taxon>Chlamydiia</taxon>
        <taxon>Chlamydiales</taxon>
        <taxon>Chlamydiaceae</taxon>
        <taxon>Chlamydia/Chlamydophila group</taxon>
        <taxon>Chlamydia</taxon>
    </lineage>
</organism>
<keyword id="KW-0378">Hydrolase</keyword>
<keyword id="KW-0546">Nucleotide metabolism</keyword>
<keyword id="KW-0547">Nucleotide-binding</keyword>
<gene>
    <name evidence="1" type="primary">dcd</name>
    <name type="ordered locus">CAB391</name>
</gene>
<evidence type="ECO:0000255" key="1">
    <source>
        <dbReference type="HAMAP-Rule" id="MF_00146"/>
    </source>
</evidence>
<proteinExistence type="inferred from homology"/>
<reference key="1">
    <citation type="journal article" date="2005" name="Genome Res.">
        <title>The Chlamydophila abortus genome sequence reveals an array of variable proteins that contribute to interspecies variation.</title>
        <authorList>
            <person name="Thomson N.R."/>
            <person name="Yeats C."/>
            <person name="Bell K."/>
            <person name="Holden M.T.G."/>
            <person name="Bentley S.D."/>
            <person name="Livingstone M."/>
            <person name="Cerdeno-Tarraga A.-M."/>
            <person name="Harris B."/>
            <person name="Doggett J."/>
            <person name="Ormond D."/>
            <person name="Mungall K."/>
            <person name="Clarke K."/>
            <person name="Feltwell T."/>
            <person name="Hance Z."/>
            <person name="Sanders M."/>
            <person name="Quail M.A."/>
            <person name="Price C."/>
            <person name="Barrell B.G."/>
            <person name="Parkhill J."/>
            <person name="Longbottom D."/>
        </authorList>
    </citation>
    <scope>NUCLEOTIDE SEQUENCE [LARGE SCALE GENOMIC DNA]</scope>
    <source>
        <strain>DSM 27085 / S26/3</strain>
    </source>
</reference>
<feature type="chain" id="PRO_1000009703" description="dCTP deaminase">
    <location>
        <begin position="1"/>
        <end position="190"/>
    </location>
</feature>
<feature type="active site" description="Proton donor/acceptor" evidence="1">
    <location>
        <position position="139"/>
    </location>
</feature>
<feature type="binding site" evidence="1">
    <location>
        <begin position="113"/>
        <end position="118"/>
    </location>
    <ligand>
        <name>dCTP</name>
        <dbReference type="ChEBI" id="CHEBI:61481"/>
    </ligand>
</feature>
<feature type="binding site" evidence="1">
    <location>
        <position position="158"/>
    </location>
    <ligand>
        <name>dCTP</name>
        <dbReference type="ChEBI" id="CHEBI:61481"/>
    </ligand>
</feature>
<feature type="binding site" evidence="1">
    <location>
        <position position="172"/>
    </location>
    <ligand>
        <name>dCTP</name>
        <dbReference type="ChEBI" id="CHEBI:61481"/>
    </ligand>
</feature>
<feature type="binding site" evidence="1">
    <location>
        <position position="181"/>
    </location>
    <ligand>
        <name>dCTP</name>
        <dbReference type="ChEBI" id="CHEBI:61481"/>
    </ligand>
</feature>
<feature type="binding site" evidence="1">
    <location>
        <position position="182"/>
    </location>
    <ligand>
        <name>dCTP</name>
        <dbReference type="ChEBI" id="CHEBI:61481"/>
    </ligand>
</feature>